<name>PDXT_LISW6</name>
<keyword id="KW-0315">Glutamine amidotransferase</keyword>
<keyword id="KW-0378">Hydrolase</keyword>
<keyword id="KW-0456">Lyase</keyword>
<keyword id="KW-0663">Pyridoxal phosphate</keyword>
<comment type="function">
    <text evidence="1">Catalyzes the hydrolysis of glutamine to glutamate and ammonia as part of the biosynthesis of pyridoxal 5'-phosphate. The resulting ammonia molecule is channeled to the active site of PdxS.</text>
</comment>
<comment type="catalytic activity">
    <reaction evidence="1">
        <text>aldehydo-D-ribose 5-phosphate + D-glyceraldehyde 3-phosphate + L-glutamine = pyridoxal 5'-phosphate + L-glutamate + phosphate + 3 H2O + H(+)</text>
        <dbReference type="Rhea" id="RHEA:31507"/>
        <dbReference type="ChEBI" id="CHEBI:15377"/>
        <dbReference type="ChEBI" id="CHEBI:15378"/>
        <dbReference type="ChEBI" id="CHEBI:29985"/>
        <dbReference type="ChEBI" id="CHEBI:43474"/>
        <dbReference type="ChEBI" id="CHEBI:58273"/>
        <dbReference type="ChEBI" id="CHEBI:58359"/>
        <dbReference type="ChEBI" id="CHEBI:59776"/>
        <dbReference type="ChEBI" id="CHEBI:597326"/>
        <dbReference type="EC" id="4.3.3.6"/>
    </reaction>
</comment>
<comment type="catalytic activity">
    <reaction evidence="1">
        <text>L-glutamine + H2O = L-glutamate + NH4(+)</text>
        <dbReference type="Rhea" id="RHEA:15889"/>
        <dbReference type="ChEBI" id="CHEBI:15377"/>
        <dbReference type="ChEBI" id="CHEBI:28938"/>
        <dbReference type="ChEBI" id="CHEBI:29985"/>
        <dbReference type="ChEBI" id="CHEBI:58359"/>
        <dbReference type="EC" id="3.5.1.2"/>
    </reaction>
</comment>
<comment type="pathway">
    <text evidence="1">Cofactor biosynthesis; pyridoxal 5'-phosphate biosynthesis.</text>
</comment>
<comment type="subunit">
    <text evidence="1">In the presence of PdxS, forms a dodecamer of heterodimers. Only shows activity in the heterodimer.</text>
</comment>
<comment type="similarity">
    <text evidence="1">Belongs to the glutaminase PdxT/SNO family.</text>
</comment>
<reference key="1">
    <citation type="journal article" date="2006" name="J. Bacteriol.">
        <title>Whole-genome sequence of Listeria welshimeri reveals common steps in genome reduction with Listeria innocua as compared to Listeria monocytogenes.</title>
        <authorList>
            <person name="Hain T."/>
            <person name="Steinweg C."/>
            <person name="Kuenne C.T."/>
            <person name="Billion A."/>
            <person name="Ghai R."/>
            <person name="Chatterjee S.S."/>
            <person name="Domann E."/>
            <person name="Kaerst U."/>
            <person name="Goesmann A."/>
            <person name="Bekel T."/>
            <person name="Bartels D."/>
            <person name="Kaiser O."/>
            <person name="Meyer F."/>
            <person name="Puehler A."/>
            <person name="Weisshaar B."/>
            <person name="Wehland J."/>
            <person name="Liang C."/>
            <person name="Dandekar T."/>
            <person name="Lampidis R."/>
            <person name="Kreft J."/>
            <person name="Goebel W."/>
            <person name="Chakraborty T."/>
        </authorList>
    </citation>
    <scope>NUCLEOTIDE SEQUENCE [LARGE SCALE GENOMIC DNA]</scope>
    <source>
        <strain>ATCC 35897 / DSM 20650 / CCUG 15529 / CIP 8149 / NCTC 11857 / SLCC 5334 / V8</strain>
    </source>
</reference>
<evidence type="ECO:0000255" key="1">
    <source>
        <dbReference type="HAMAP-Rule" id="MF_01615"/>
    </source>
</evidence>
<sequence length="188" mass="20669">MKKIGVLALQGAVDEHIQMIKSAGALPSKVKHPSDLNELDGLVLPGGESTTMRKIMKRYDLIEPVRAFAKEGKAIFGTCAGLVLLSKEIEGGEESLGLIDTTAVRNGFGRQKESFEAELNVEIFSDAPFEAVFIRAPYLIEPSPEVSVLATFEDKIVAAKEANILVTAFHPELTNDNRFMRFFIEKMV</sequence>
<feature type="chain" id="PRO_0000293002" description="Pyridoxal 5'-phosphate synthase subunit PdxT">
    <location>
        <begin position="1"/>
        <end position="188"/>
    </location>
</feature>
<feature type="active site" description="Nucleophile" evidence="1">
    <location>
        <position position="79"/>
    </location>
</feature>
<feature type="active site" description="Charge relay system" evidence="1">
    <location>
        <position position="170"/>
    </location>
</feature>
<feature type="active site" description="Charge relay system" evidence="1">
    <location>
        <position position="172"/>
    </location>
</feature>
<feature type="binding site" evidence="1">
    <location>
        <begin position="47"/>
        <end position="49"/>
    </location>
    <ligand>
        <name>L-glutamine</name>
        <dbReference type="ChEBI" id="CHEBI:58359"/>
    </ligand>
</feature>
<feature type="binding site" evidence="1">
    <location>
        <position position="105"/>
    </location>
    <ligand>
        <name>L-glutamine</name>
        <dbReference type="ChEBI" id="CHEBI:58359"/>
    </ligand>
</feature>
<feature type="binding site" evidence="1">
    <location>
        <begin position="134"/>
        <end position="135"/>
    </location>
    <ligand>
        <name>L-glutamine</name>
        <dbReference type="ChEBI" id="CHEBI:58359"/>
    </ligand>
</feature>
<accession>A0AKK9</accession>
<proteinExistence type="inferred from homology"/>
<protein>
    <recommendedName>
        <fullName evidence="1">Pyridoxal 5'-phosphate synthase subunit PdxT</fullName>
        <ecNumber evidence="1">4.3.3.6</ecNumber>
    </recommendedName>
    <alternativeName>
        <fullName evidence="1">Pdx2</fullName>
    </alternativeName>
    <alternativeName>
        <fullName evidence="1">Pyridoxal 5'-phosphate synthase glutaminase subunit</fullName>
        <ecNumber evidence="1">3.5.1.2</ecNumber>
    </alternativeName>
</protein>
<organism>
    <name type="scientific">Listeria welshimeri serovar 6b (strain ATCC 35897 / DSM 20650 / CCUG 15529 / CIP 8149 / NCTC 11857 / SLCC 5334 / V8)</name>
    <dbReference type="NCBI Taxonomy" id="386043"/>
    <lineage>
        <taxon>Bacteria</taxon>
        <taxon>Bacillati</taxon>
        <taxon>Bacillota</taxon>
        <taxon>Bacilli</taxon>
        <taxon>Bacillales</taxon>
        <taxon>Listeriaceae</taxon>
        <taxon>Listeria</taxon>
    </lineage>
</organism>
<dbReference type="EC" id="4.3.3.6" evidence="1"/>
<dbReference type="EC" id="3.5.1.2" evidence="1"/>
<dbReference type="EMBL" id="AM263198">
    <property type="protein sequence ID" value="CAK21541.1"/>
    <property type="molecule type" value="Genomic_DNA"/>
</dbReference>
<dbReference type="RefSeq" id="WP_011702881.1">
    <property type="nucleotide sequence ID" value="NC_008555.1"/>
</dbReference>
<dbReference type="SMR" id="A0AKK9"/>
<dbReference type="STRING" id="386043.lwe2123"/>
<dbReference type="GeneID" id="61190023"/>
<dbReference type="KEGG" id="lwe:lwe2123"/>
<dbReference type="eggNOG" id="COG0311">
    <property type="taxonomic scope" value="Bacteria"/>
</dbReference>
<dbReference type="HOGENOM" id="CLU_069674_2_0_9"/>
<dbReference type="OrthoDB" id="9810320at2"/>
<dbReference type="UniPathway" id="UPA00245"/>
<dbReference type="Proteomes" id="UP000000779">
    <property type="component" value="Chromosome"/>
</dbReference>
<dbReference type="GO" id="GO:0005829">
    <property type="term" value="C:cytosol"/>
    <property type="evidence" value="ECO:0007669"/>
    <property type="project" value="TreeGrafter"/>
</dbReference>
<dbReference type="GO" id="GO:1903600">
    <property type="term" value="C:glutaminase complex"/>
    <property type="evidence" value="ECO:0007669"/>
    <property type="project" value="TreeGrafter"/>
</dbReference>
<dbReference type="GO" id="GO:0004359">
    <property type="term" value="F:glutaminase activity"/>
    <property type="evidence" value="ECO:0007669"/>
    <property type="project" value="UniProtKB-UniRule"/>
</dbReference>
<dbReference type="GO" id="GO:0036381">
    <property type="term" value="F:pyridoxal 5'-phosphate synthase (glutamine hydrolysing) activity"/>
    <property type="evidence" value="ECO:0007669"/>
    <property type="project" value="UniProtKB-UniRule"/>
</dbReference>
<dbReference type="GO" id="GO:0006543">
    <property type="term" value="P:glutamine catabolic process"/>
    <property type="evidence" value="ECO:0007669"/>
    <property type="project" value="UniProtKB-UniRule"/>
</dbReference>
<dbReference type="GO" id="GO:0042823">
    <property type="term" value="P:pyridoxal phosphate biosynthetic process"/>
    <property type="evidence" value="ECO:0007669"/>
    <property type="project" value="UniProtKB-UniRule"/>
</dbReference>
<dbReference type="GO" id="GO:0008614">
    <property type="term" value="P:pyridoxine metabolic process"/>
    <property type="evidence" value="ECO:0007669"/>
    <property type="project" value="TreeGrafter"/>
</dbReference>
<dbReference type="CDD" id="cd01749">
    <property type="entry name" value="GATase1_PB"/>
    <property type="match status" value="1"/>
</dbReference>
<dbReference type="FunFam" id="3.40.50.880:FF:000010">
    <property type="entry name" value="uncharacterized protein LOC100176842 isoform X2"/>
    <property type="match status" value="1"/>
</dbReference>
<dbReference type="Gene3D" id="3.40.50.880">
    <property type="match status" value="1"/>
</dbReference>
<dbReference type="HAMAP" id="MF_01615">
    <property type="entry name" value="PdxT"/>
    <property type="match status" value="1"/>
</dbReference>
<dbReference type="InterPro" id="IPR029062">
    <property type="entry name" value="Class_I_gatase-like"/>
</dbReference>
<dbReference type="InterPro" id="IPR002161">
    <property type="entry name" value="PdxT/SNO"/>
</dbReference>
<dbReference type="InterPro" id="IPR021196">
    <property type="entry name" value="PdxT/SNO_CS"/>
</dbReference>
<dbReference type="NCBIfam" id="TIGR03800">
    <property type="entry name" value="PLP_synth_Pdx2"/>
    <property type="match status" value="1"/>
</dbReference>
<dbReference type="PANTHER" id="PTHR31559">
    <property type="entry name" value="PYRIDOXAL 5'-PHOSPHATE SYNTHASE SUBUNIT SNO"/>
    <property type="match status" value="1"/>
</dbReference>
<dbReference type="PANTHER" id="PTHR31559:SF0">
    <property type="entry name" value="PYRIDOXAL 5'-PHOSPHATE SYNTHASE SUBUNIT SNO1-RELATED"/>
    <property type="match status" value="1"/>
</dbReference>
<dbReference type="Pfam" id="PF01174">
    <property type="entry name" value="SNO"/>
    <property type="match status" value="1"/>
</dbReference>
<dbReference type="PIRSF" id="PIRSF005639">
    <property type="entry name" value="Glut_amidoT_SNO"/>
    <property type="match status" value="1"/>
</dbReference>
<dbReference type="SUPFAM" id="SSF52317">
    <property type="entry name" value="Class I glutamine amidotransferase-like"/>
    <property type="match status" value="1"/>
</dbReference>
<dbReference type="PROSITE" id="PS01236">
    <property type="entry name" value="PDXT_SNO_1"/>
    <property type="match status" value="1"/>
</dbReference>
<dbReference type="PROSITE" id="PS51130">
    <property type="entry name" value="PDXT_SNO_2"/>
    <property type="match status" value="1"/>
</dbReference>
<gene>
    <name evidence="1" type="primary">pdxT</name>
    <name type="ordered locus">lwe2123</name>
</gene>